<reference key="1">
    <citation type="submission" date="2007-12" db="EMBL/GenBank/DDBJ databases">
        <title>Complete sequence of chromosome of Francisella philomiragia subsp. philomiragia ATCC 25017.</title>
        <authorList>
            <consortium name="US DOE Joint Genome Institute"/>
            <person name="Copeland A."/>
            <person name="Lucas S."/>
            <person name="Lapidus A."/>
            <person name="Barry K."/>
            <person name="Detter J.C."/>
            <person name="Glavina del Rio T."/>
            <person name="Hammon N."/>
            <person name="Israni S."/>
            <person name="Dalin E."/>
            <person name="Tice H."/>
            <person name="Pitluck S."/>
            <person name="Chain P."/>
            <person name="Malfatti S."/>
            <person name="Shin M."/>
            <person name="Vergez L."/>
            <person name="Schmutz J."/>
            <person name="Larimer F."/>
            <person name="Land M."/>
            <person name="Hauser L."/>
            <person name="Richardson P."/>
        </authorList>
    </citation>
    <scope>NUCLEOTIDE SEQUENCE [LARGE SCALE GENOMIC DNA]</scope>
    <source>
        <strain>ATCC 25017 / CCUG 19701 / FSC 153 / O#319-036</strain>
    </source>
</reference>
<feature type="chain" id="PRO_1000087840" description="Proline--tRNA ligase">
    <location>
        <begin position="1"/>
        <end position="565"/>
    </location>
</feature>
<accession>B0TXX4</accession>
<organism>
    <name type="scientific">Francisella philomiragia subsp. philomiragia (strain ATCC 25017 / CCUG 19701 / FSC 153 / O#319-036)</name>
    <dbReference type="NCBI Taxonomy" id="484022"/>
    <lineage>
        <taxon>Bacteria</taxon>
        <taxon>Pseudomonadati</taxon>
        <taxon>Pseudomonadota</taxon>
        <taxon>Gammaproteobacteria</taxon>
        <taxon>Thiotrichales</taxon>
        <taxon>Francisellaceae</taxon>
        <taxon>Francisella</taxon>
    </lineage>
</organism>
<dbReference type="EC" id="6.1.1.15" evidence="1"/>
<dbReference type="EMBL" id="CP000937">
    <property type="protein sequence ID" value="ABZ87535.1"/>
    <property type="molecule type" value="Genomic_DNA"/>
</dbReference>
<dbReference type="SMR" id="B0TXX4"/>
<dbReference type="KEGG" id="fph:Fphi_1310"/>
<dbReference type="eggNOG" id="COG0442">
    <property type="taxonomic scope" value="Bacteria"/>
</dbReference>
<dbReference type="HOGENOM" id="CLU_016739_0_0_6"/>
<dbReference type="GO" id="GO:0005829">
    <property type="term" value="C:cytosol"/>
    <property type="evidence" value="ECO:0007669"/>
    <property type="project" value="TreeGrafter"/>
</dbReference>
<dbReference type="GO" id="GO:0002161">
    <property type="term" value="F:aminoacyl-tRNA deacylase activity"/>
    <property type="evidence" value="ECO:0007669"/>
    <property type="project" value="InterPro"/>
</dbReference>
<dbReference type="GO" id="GO:0005524">
    <property type="term" value="F:ATP binding"/>
    <property type="evidence" value="ECO:0007669"/>
    <property type="project" value="UniProtKB-UniRule"/>
</dbReference>
<dbReference type="GO" id="GO:0004827">
    <property type="term" value="F:proline-tRNA ligase activity"/>
    <property type="evidence" value="ECO:0007669"/>
    <property type="project" value="UniProtKB-UniRule"/>
</dbReference>
<dbReference type="GO" id="GO:0006433">
    <property type="term" value="P:prolyl-tRNA aminoacylation"/>
    <property type="evidence" value="ECO:0007669"/>
    <property type="project" value="UniProtKB-UniRule"/>
</dbReference>
<dbReference type="CDD" id="cd04334">
    <property type="entry name" value="ProRS-INS"/>
    <property type="match status" value="1"/>
</dbReference>
<dbReference type="CDD" id="cd00861">
    <property type="entry name" value="ProRS_anticodon_short"/>
    <property type="match status" value="1"/>
</dbReference>
<dbReference type="CDD" id="cd00779">
    <property type="entry name" value="ProRS_core_prok"/>
    <property type="match status" value="1"/>
</dbReference>
<dbReference type="FunFam" id="3.30.930.10:FF:000015">
    <property type="entry name" value="Proline--tRNA ligase"/>
    <property type="match status" value="1"/>
</dbReference>
<dbReference type="Gene3D" id="3.40.50.800">
    <property type="entry name" value="Anticodon-binding domain"/>
    <property type="match status" value="1"/>
</dbReference>
<dbReference type="Gene3D" id="3.30.930.10">
    <property type="entry name" value="Bira Bifunctional Protein, Domain 2"/>
    <property type="match status" value="2"/>
</dbReference>
<dbReference type="Gene3D" id="3.90.960.10">
    <property type="entry name" value="YbaK/aminoacyl-tRNA synthetase-associated domain"/>
    <property type="match status" value="1"/>
</dbReference>
<dbReference type="HAMAP" id="MF_01569">
    <property type="entry name" value="Pro_tRNA_synth_type1"/>
    <property type="match status" value="1"/>
</dbReference>
<dbReference type="InterPro" id="IPR002314">
    <property type="entry name" value="aa-tRNA-synt_IIb"/>
</dbReference>
<dbReference type="InterPro" id="IPR006195">
    <property type="entry name" value="aa-tRNA-synth_II"/>
</dbReference>
<dbReference type="InterPro" id="IPR045864">
    <property type="entry name" value="aa-tRNA-synth_II/BPL/LPL"/>
</dbReference>
<dbReference type="InterPro" id="IPR004154">
    <property type="entry name" value="Anticodon-bd"/>
</dbReference>
<dbReference type="InterPro" id="IPR036621">
    <property type="entry name" value="Anticodon-bd_dom_sf"/>
</dbReference>
<dbReference type="InterPro" id="IPR002316">
    <property type="entry name" value="Pro-tRNA-ligase_IIa"/>
</dbReference>
<dbReference type="InterPro" id="IPR004500">
    <property type="entry name" value="Pro-tRNA-synth_IIa_bac-type"/>
</dbReference>
<dbReference type="InterPro" id="IPR023717">
    <property type="entry name" value="Pro-tRNA-Synthase_IIa_type1"/>
</dbReference>
<dbReference type="InterPro" id="IPR050062">
    <property type="entry name" value="Pro-tRNA_synthetase"/>
</dbReference>
<dbReference type="InterPro" id="IPR044140">
    <property type="entry name" value="ProRS_anticodon_short"/>
</dbReference>
<dbReference type="InterPro" id="IPR033730">
    <property type="entry name" value="ProRS_core_prok"/>
</dbReference>
<dbReference type="InterPro" id="IPR036754">
    <property type="entry name" value="YbaK/aa-tRNA-synt-asso_dom_sf"/>
</dbReference>
<dbReference type="InterPro" id="IPR007214">
    <property type="entry name" value="YbaK/aa-tRNA-synth-assoc-dom"/>
</dbReference>
<dbReference type="NCBIfam" id="NF006625">
    <property type="entry name" value="PRK09194.1"/>
    <property type="match status" value="1"/>
</dbReference>
<dbReference type="NCBIfam" id="TIGR00409">
    <property type="entry name" value="proS_fam_II"/>
    <property type="match status" value="1"/>
</dbReference>
<dbReference type="PANTHER" id="PTHR42753">
    <property type="entry name" value="MITOCHONDRIAL RIBOSOME PROTEIN L39/PROLYL-TRNA LIGASE FAMILY MEMBER"/>
    <property type="match status" value="1"/>
</dbReference>
<dbReference type="PANTHER" id="PTHR42753:SF2">
    <property type="entry name" value="PROLINE--TRNA LIGASE"/>
    <property type="match status" value="1"/>
</dbReference>
<dbReference type="Pfam" id="PF03129">
    <property type="entry name" value="HGTP_anticodon"/>
    <property type="match status" value="1"/>
</dbReference>
<dbReference type="Pfam" id="PF00587">
    <property type="entry name" value="tRNA-synt_2b"/>
    <property type="match status" value="1"/>
</dbReference>
<dbReference type="Pfam" id="PF04073">
    <property type="entry name" value="tRNA_edit"/>
    <property type="match status" value="1"/>
</dbReference>
<dbReference type="PRINTS" id="PR01046">
    <property type="entry name" value="TRNASYNTHPRO"/>
</dbReference>
<dbReference type="SUPFAM" id="SSF52954">
    <property type="entry name" value="Class II aaRS ABD-related"/>
    <property type="match status" value="1"/>
</dbReference>
<dbReference type="SUPFAM" id="SSF55681">
    <property type="entry name" value="Class II aaRS and biotin synthetases"/>
    <property type="match status" value="1"/>
</dbReference>
<dbReference type="SUPFAM" id="SSF55826">
    <property type="entry name" value="YbaK/ProRS associated domain"/>
    <property type="match status" value="1"/>
</dbReference>
<dbReference type="PROSITE" id="PS50862">
    <property type="entry name" value="AA_TRNA_LIGASE_II"/>
    <property type="match status" value="1"/>
</dbReference>
<name>SYP_FRAP2</name>
<evidence type="ECO:0000255" key="1">
    <source>
        <dbReference type="HAMAP-Rule" id="MF_01569"/>
    </source>
</evidence>
<protein>
    <recommendedName>
        <fullName evidence="1">Proline--tRNA ligase</fullName>
        <ecNumber evidence="1">6.1.1.15</ecNumber>
    </recommendedName>
    <alternativeName>
        <fullName evidence="1">Prolyl-tRNA synthetase</fullName>
        <shortName evidence="1">ProRS</shortName>
    </alternativeName>
</protein>
<keyword id="KW-0030">Aminoacyl-tRNA synthetase</keyword>
<keyword id="KW-0067">ATP-binding</keyword>
<keyword id="KW-0963">Cytoplasm</keyword>
<keyword id="KW-0436">Ligase</keyword>
<keyword id="KW-0547">Nucleotide-binding</keyword>
<keyword id="KW-0648">Protein biosynthesis</keyword>
<sequence>MKATQTLIATTKELPKEAVLTSHQYMLKAGLIKKLASGIYTWMPIGLKVLQKIQNIVREEMNKAGASELLLPSVLPSELLQETHRWDKFGPELLKLKDRHERDFCYGPTHEEPIVDMARDTIKSYKQLPLNLYQIQTKFRDEIRPRFGVMRAREFIMKDAYSFHENSECLHNTYNKMHETYCNILDKIGLVYRPVRADTGAIGGDNSHEFQVLANAGEDIICYSNGSDYAANIELATYAKPDLSTRAVSENTITKIHTPNIKTIEKLCTELDFDIKKTIKTMVIKDAKGNFFALVIRGDHELNETKINKLEQIVAPYTLATKDEIFSIFNANPGSLGIVNCPVQIIADYSAMMIEDICCGANEDDYHFTNVNWGRDITSYQIADIRNVVTGDISPDNNGTLELTNGIEVGHIFELEDVYSKPMNANIIGQDGKSKPMLMGCYGFGVSRVMAAAIEQSHDENGIIWPETIAPYQVAILPINYNKSESVKQTADKLYQELLVKGIDVILDDRGARPGVMFADADLIGFSHHVVIGDRLLEQGLVEYKNRKTQEKQEIRLEKLFDILA</sequence>
<proteinExistence type="inferred from homology"/>
<gene>
    <name evidence="1" type="primary">proS</name>
    <name type="ordered locus">Fphi_1310</name>
</gene>
<comment type="function">
    <text evidence="1">Catalyzes the attachment of proline to tRNA(Pro) in a two-step reaction: proline is first activated by ATP to form Pro-AMP and then transferred to the acceptor end of tRNA(Pro). As ProRS can inadvertently accommodate and process non-cognate amino acids such as alanine and cysteine, to avoid such errors it has two additional distinct editing activities against alanine. One activity is designated as 'pretransfer' editing and involves the tRNA(Pro)-independent hydrolysis of activated Ala-AMP. The other activity is designated 'posttransfer' editing and involves deacylation of mischarged Ala-tRNA(Pro). The misacylated Cys-tRNA(Pro) is not edited by ProRS.</text>
</comment>
<comment type="catalytic activity">
    <reaction evidence="1">
        <text>tRNA(Pro) + L-proline + ATP = L-prolyl-tRNA(Pro) + AMP + diphosphate</text>
        <dbReference type="Rhea" id="RHEA:14305"/>
        <dbReference type="Rhea" id="RHEA-COMP:9700"/>
        <dbReference type="Rhea" id="RHEA-COMP:9702"/>
        <dbReference type="ChEBI" id="CHEBI:30616"/>
        <dbReference type="ChEBI" id="CHEBI:33019"/>
        <dbReference type="ChEBI" id="CHEBI:60039"/>
        <dbReference type="ChEBI" id="CHEBI:78442"/>
        <dbReference type="ChEBI" id="CHEBI:78532"/>
        <dbReference type="ChEBI" id="CHEBI:456215"/>
        <dbReference type="EC" id="6.1.1.15"/>
    </reaction>
</comment>
<comment type="subunit">
    <text evidence="1">Homodimer.</text>
</comment>
<comment type="subcellular location">
    <subcellularLocation>
        <location evidence="1">Cytoplasm</location>
    </subcellularLocation>
</comment>
<comment type="domain">
    <text evidence="1">Consists of three domains: the N-terminal catalytic domain, the editing domain and the C-terminal anticodon-binding domain.</text>
</comment>
<comment type="similarity">
    <text evidence="1">Belongs to the class-II aminoacyl-tRNA synthetase family. ProS type 1 subfamily.</text>
</comment>